<protein>
    <recommendedName>
        <fullName evidence="1">Trigger factor</fullName>
        <shortName evidence="1">TF</shortName>
        <ecNumber evidence="1">5.2.1.8</ecNumber>
    </recommendedName>
    <alternativeName>
        <fullName evidence="1">PPIase</fullName>
    </alternativeName>
</protein>
<sequence length="433" mass="48024">MSISIETLEGLQRRVTITVAADKIEAAYKEQLKGYAKNARVDGFRKGKVPHAIIEQRFGLAARQDVLSDEMQRAFFDAVIAEKINLAGRPTFTPNNYQPSQEFSFTATFEVFPEVELKGLENIEVEKPVVEITEADLDKMIDVLRKQQATWAESQAAAQAEDRVVIDFVGSVDGEEFEGGKATDFTLAMGQSRMIPGFEEGIVGHKAGEQFDIDVTFPEEYHAENLKGKAAKFAITLKKVENIVLPELTEEFVKKFGSAKTVEDLRAEIKKNMQRELKNAVTARVKNQVINGLIAQNEIEVPAAAVAEEVDVLRRQAVQRFGGKPEMAAQLPAELFEADAKRRVQVGLLLSTVIGTNELKVDEKRVEETIAEIASAYEQPAEVVAHYAKNRQLTENIRNVVLEEQAVEVVLAKAKVTEKATSFDEVMAQQAQG</sequence>
<dbReference type="EC" id="5.2.1.8" evidence="1"/>
<dbReference type="EMBL" id="CP001091">
    <property type="protein sequence ID" value="ACE62219.1"/>
    <property type="molecule type" value="Genomic_DNA"/>
</dbReference>
<dbReference type="RefSeq" id="WP_005598766.1">
    <property type="nucleotide sequence ID" value="NC_010939.1"/>
</dbReference>
<dbReference type="SMR" id="B3GYI8"/>
<dbReference type="GeneID" id="48599773"/>
<dbReference type="KEGG" id="apa:APP7_1567"/>
<dbReference type="HOGENOM" id="CLU_033058_2_0_6"/>
<dbReference type="Proteomes" id="UP000001226">
    <property type="component" value="Chromosome"/>
</dbReference>
<dbReference type="GO" id="GO:0005737">
    <property type="term" value="C:cytoplasm"/>
    <property type="evidence" value="ECO:0007669"/>
    <property type="project" value="UniProtKB-SubCell"/>
</dbReference>
<dbReference type="GO" id="GO:0003755">
    <property type="term" value="F:peptidyl-prolyl cis-trans isomerase activity"/>
    <property type="evidence" value="ECO:0007669"/>
    <property type="project" value="UniProtKB-UniRule"/>
</dbReference>
<dbReference type="GO" id="GO:0044183">
    <property type="term" value="F:protein folding chaperone"/>
    <property type="evidence" value="ECO:0007669"/>
    <property type="project" value="TreeGrafter"/>
</dbReference>
<dbReference type="GO" id="GO:0043022">
    <property type="term" value="F:ribosome binding"/>
    <property type="evidence" value="ECO:0007669"/>
    <property type="project" value="TreeGrafter"/>
</dbReference>
<dbReference type="GO" id="GO:0051083">
    <property type="term" value="P:'de novo' cotranslational protein folding"/>
    <property type="evidence" value="ECO:0007669"/>
    <property type="project" value="TreeGrafter"/>
</dbReference>
<dbReference type="GO" id="GO:0051301">
    <property type="term" value="P:cell division"/>
    <property type="evidence" value="ECO:0007669"/>
    <property type="project" value="UniProtKB-KW"/>
</dbReference>
<dbReference type="GO" id="GO:0061077">
    <property type="term" value="P:chaperone-mediated protein folding"/>
    <property type="evidence" value="ECO:0007669"/>
    <property type="project" value="TreeGrafter"/>
</dbReference>
<dbReference type="GO" id="GO:0015031">
    <property type="term" value="P:protein transport"/>
    <property type="evidence" value="ECO:0007669"/>
    <property type="project" value="UniProtKB-UniRule"/>
</dbReference>
<dbReference type="GO" id="GO:0043335">
    <property type="term" value="P:protein unfolding"/>
    <property type="evidence" value="ECO:0007669"/>
    <property type="project" value="TreeGrafter"/>
</dbReference>
<dbReference type="FunFam" id="3.10.50.40:FF:000001">
    <property type="entry name" value="Trigger factor"/>
    <property type="match status" value="1"/>
</dbReference>
<dbReference type="Gene3D" id="3.10.50.40">
    <property type="match status" value="1"/>
</dbReference>
<dbReference type="Gene3D" id="3.30.70.1050">
    <property type="entry name" value="Trigger factor ribosome-binding domain"/>
    <property type="match status" value="1"/>
</dbReference>
<dbReference type="Gene3D" id="1.10.3120.10">
    <property type="entry name" value="Trigger factor, C-terminal domain"/>
    <property type="match status" value="1"/>
</dbReference>
<dbReference type="HAMAP" id="MF_00303">
    <property type="entry name" value="Trigger_factor_Tig"/>
    <property type="match status" value="1"/>
</dbReference>
<dbReference type="InterPro" id="IPR046357">
    <property type="entry name" value="PPIase_dom_sf"/>
</dbReference>
<dbReference type="InterPro" id="IPR001179">
    <property type="entry name" value="PPIase_FKBP_dom"/>
</dbReference>
<dbReference type="InterPro" id="IPR005215">
    <property type="entry name" value="Trig_fac"/>
</dbReference>
<dbReference type="InterPro" id="IPR008880">
    <property type="entry name" value="Trigger_fac_C"/>
</dbReference>
<dbReference type="InterPro" id="IPR037041">
    <property type="entry name" value="Trigger_fac_C_sf"/>
</dbReference>
<dbReference type="InterPro" id="IPR008881">
    <property type="entry name" value="Trigger_fac_ribosome-bd_bac"/>
</dbReference>
<dbReference type="InterPro" id="IPR036611">
    <property type="entry name" value="Trigger_fac_ribosome-bd_sf"/>
</dbReference>
<dbReference type="InterPro" id="IPR027304">
    <property type="entry name" value="Trigger_fact/SurA_dom_sf"/>
</dbReference>
<dbReference type="NCBIfam" id="TIGR00115">
    <property type="entry name" value="tig"/>
    <property type="match status" value="1"/>
</dbReference>
<dbReference type="PANTHER" id="PTHR30560">
    <property type="entry name" value="TRIGGER FACTOR CHAPERONE AND PEPTIDYL-PROLYL CIS/TRANS ISOMERASE"/>
    <property type="match status" value="1"/>
</dbReference>
<dbReference type="PANTHER" id="PTHR30560:SF3">
    <property type="entry name" value="TRIGGER FACTOR-LIKE PROTEIN TIG, CHLOROPLASTIC"/>
    <property type="match status" value="1"/>
</dbReference>
<dbReference type="Pfam" id="PF00254">
    <property type="entry name" value="FKBP_C"/>
    <property type="match status" value="1"/>
</dbReference>
<dbReference type="Pfam" id="PF05698">
    <property type="entry name" value="Trigger_C"/>
    <property type="match status" value="1"/>
</dbReference>
<dbReference type="Pfam" id="PF05697">
    <property type="entry name" value="Trigger_N"/>
    <property type="match status" value="1"/>
</dbReference>
<dbReference type="PIRSF" id="PIRSF003095">
    <property type="entry name" value="Trigger_factor"/>
    <property type="match status" value="1"/>
</dbReference>
<dbReference type="SUPFAM" id="SSF54534">
    <property type="entry name" value="FKBP-like"/>
    <property type="match status" value="1"/>
</dbReference>
<dbReference type="SUPFAM" id="SSF109998">
    <property type="entry name" value="Triger factor/SurA peptide-binding domain-like"/>
    <property type="match status" value="1"/>
</dbReference>
<dbReference type="SUPFAM" id="SSF102735">
    <property type="entry name" value="Trigger factor ribosome-binding domain"/>
    <property type="match status" value="1"/>
</dbReference>
<dbReference type="PROSITE" id="PS50059">
    <property type="entry name" value="FKBP_PPIASE"/>
    <property type="match status" value="1"/>
</dbReference>
<proteinExistence type="inferred from homology"/>
<reference key="1">
    <citation type="submission" date="2008-06" db="EMBL/GenBank/DDBJ databases">
        <title>Genome and proteome analysis of A. pleuropneumoniae serotype 7.</title>
        <authorList>
            <person name="Linke B."/>
            <person name="Buettner F."/>
            <person name="Martinez-Arias R."/>
            <person name="Goesmann A."/>
            <person name="Baltes N."/>
            <person name="Tegetmeyer H."/>
            <person name="Singh M."/>
            <person name="Gerlach G.F."/>
        </authorList>
    </citation>
    <scope>NUCLEOTIDE SEQUENCE [LARGE SCALE GENOMIC DNA]</scope>
    <source>
        <strain>AP76</strain>
    </source>
</reference>
<evidence type="ECO:0000255" key="1">
    <source>
        <dbReference type="HAMAP-Rule" id="MF_00303"/>
    </source>
</evidence>
<name>TIG_ACTP7</name>
<accession>B3GYI8</accession>
<keyword id="KW-0131">Cell cycle</keyword>
<keyword id="KW-0132">Cell division</keyword>
<keyword id="KW-0143">Chaperone</keyword>
<keyword id="KW-0963">Cytoplasm</keyword>
<keyword id="KW-0413">Isomerase</keyword>
<keyword id="KW-0697">Rotamase</keyword>
<feature type="chain" id="PRO_1000115495" description="Trigger factor">
    <location>
        <begin position="1"/>
        <end position="433"/>
    </location>
</feature>
<feature type="domain" description="PPIase FKBP-type" evidence="1">
    <location>
        <begin position="161"/>
        <end position="246"/>
    </location>
</feature>
<gene>
    <name evidence="1" type="primary">tig</name>
    <name type="ordered locus">APP7_1567</name>
</gene>
<comment type="function">
    <text evidence="1">Involved in protein export. Acts as a chaperone by maintaining the newly synthesized protein in an open conformation. Functions as a peptidyl-prolyl cis-trans isomerase.</text>
</comment>
<comment type="catalytic activity">
    <reaction evidence="1">
        <text>[protein]-peptidylproline (omega=180) = [protein]-peptidylproline (omega=0)</text>
        <dbReference type="Rhea" id="RHEA:16237"/>
        <dbReference type="Rhea" id="RHEA-COMP:10747"/>
        <dbReference type="Rhea" id="RHEA-COMP:10748"/>
        <dbReference type="ChEBI" id="CHEBI:83833"/>
        <dbReference type="ChEBI" id="CHEBI:83834"/>
        <dbReference type="EC" id="5.2.1.8"/>
    </reaction>
</comment>
<comment type="subcellular location">
    <subcellularLocation>
        <location>Cytoplasm</location>
    </subcellularLocation>
    <text evidence="1">About half TF is bound to the ribosome near the polypeptide exit tunnel while the other half is free in the cytoplasm.</text>
</comment>
<comment type="domain">
    <text evidence="1">Consists of 3 domains; the N-terminus binds the ribosome, the middle domain has PPIase activity, while the C-terminus has intrinsic chaperone activity on its own.</text>
</comment>
<comment type="similarity">
    <text evidence="1">Belongs to the FKBP-type PPIase family. Tig subfamily.</text>
</comment>
<organism>
    <name type="scientific">Actinobacillus pleuropneumoniae serotype 7 (strain AP76)</name>
    <dbReference type="NCBI Taxonomy" id="537457"/>
    <lineage>
        <taxon>Bacteria</taxon>
        <taxon>Pseudomonadati</taxon>
        <taxon>Pseudomonadota</taxon>
        <taxon>Gammaproteobacteria</taxon>
        <taxon>Pasteurellales</taxon>
        <taxon>Pasteurellaceae</taxon>
        <taxon>Actinobacillus</taxon>
    </lineage>
</organism>